<protein>
    <recommendedName>
        <fullName evidence="1">2-keto-3-deoxygluconate permease</fullName>
        <shortName evidence="1">KDG permease</shortName>
    </recommendedName>
</protein>
<reference key="1">
    <citation type="journal article" date="2008" name="J. Bacteriol.">
        <title>The complete genome sequence of Escherichia coli DH10B: insights into the biology of a laboratory workhorse.</title>
        <authorList>
            <person name="Durfee T."/>
            <person name="Nelson R."/>
            <person name="Baldwin S."/>
            <person name="Plunkett G. III"/>
            <person name="Burland V."/>
            <person name="Mau B."/>
            <person name="Petrosino J.F."/>
            <person name="Qin X."/>
            <person name="Muzny D.M."/>
            <person name="Ayele M."/>
            <person name="Gibbs R.A."/>
            <person name="Csorgo B."/>
            <person name="Posfai G."/>
            <person name="Weinstock G.M."/>
            <person name="Blattner F.R."/>
        </authorList>
    </citation>
    <scope>NUCLEOTIDE SEQUENCE [LARGE SCALE GENOMIC DNA]</scope>
    <source>
        <strain>K12 / DH10B</strain>
    </source>
</reference>
<proteinExistence type="inferred from homology"/>
<organism>
    <name type="scientific">Escherichia coli (strain K12 / DH10B)</name>
    <dbReference type="NCBI Taxonomy" id="316385"/>
    <lineage>
        <taxon>Bacteria</taxon>
        <taxon>Pseudomonadati</taxon>
        <taxon>Pseudomonadota</taxon>
        <taxon>Gammaproteobacteria</taxon>
        <taxon>Enterobacterales</taxon>
        <taxon>Enterobacteriaceae</taxon>
        <taxon>Escherichia</taxon>
    </lineage>
</organism>
<gene>
    <name evidence="1" type="primary">kdgT</name>
    <name type="ordered locus">ECDH10B_4099</name>
</gene>
<comment type="function">
    <text evidence="1">Catalyzes the proton-dependent uptake of 2-keto-3-deoxygluconate (KDG) into the cell.</text>
</comment>
<comment type="catalytic activity">
    <reaction evidence="1">
        <text>2-dehydro-3-deoxy-D-gluconate(in) + H(+)(in) = 2-dehydro-3-deoxy-D-gluconate(out) + H(+)(out)</text>
        <dbReference type="Rhea" id="RHEA:29943"/>
        <dbReference type="ChEBI" id="CHEBI:15378"/>
        <dbReference type="ChEBI" id="CHEBI:57990"/>
    </reaction>
    <physiologicalReaction direction="right-to-left" evidence="1">
        <dbReference type="Rhea" id="RHEA:29945"/>
    </physiologicalReaction>
</comment>
<comment type="subcellular location">
    <subcellularLocation>
        <location evidence="1">Cell inner membrane</location>
        <topology evidence="1">Multi-pass membrane protein</topology>
    </subcellularLocation>
</comment>
<comment type="similarity">
    <text evidence="1">Belongs to the KdgT transporter family.</text>
</comment>
<sequence length="327" mass="33669">MQIKRSIEKIPGGMMLVPLFLGALCHTFSPGAGKYFGSFTNGMITGTVPILAVWFFCMGASIKLSATGTVLRKSGTLVVTKIAVAWVVAAIASRIIPEHGVEVGFFAGLSTLALVAAMDMTNGGLYASIMQQYGTKEEAGAFVLMSLESGPLMTMIILGTAGIASFEPHVFVGAVLPFLVGFALGNLDPELREFFSKAVQTLIPFFAFALGNTIDLTVIAQTGLLGILLGVAVIIVTGIPLIIADKLIGGGDGTAGIAASSSAGAAVATPVLIAEMVPAFKPMAPAATSLVATAVIVTSILVPILTSIWSRKVKARAAKIEILGTVK</sequence>
<feature type="chain" id="PRO_1000092362" description="2-keto-3-deoxygluconate permease">
    <location>
        <begin position="1"/>
        <end position="327"/>
    </location>
</feature>
<feature type="transmembrane region" description="Helical" evidence="1">
    <location>
        <begin position="10"/>
        <end position="30"/>
    </location>
</feature>
<feature type="transmembrane region" description="Helical" evidence="1">
    <location>
        <begin position="42"/>
        <end position="62"/>
    </location>
</feature>
<feature type="transmembrane region" description="Helical" evidence="1">
    <location>
        <begin position="73"/>
        <end position="93"/>
    </location>
</feature>
<feature type="transmembrane region" description="Helical" evidence="1">
    <location>
        <begin position="95"/>
        <end position="115"/>
    </location>
</feature>
<feature type="transmembrane region" description="Helical" evidence="1">
    <location>
        <begin position="139"/>
        <end position="159"/>
    </location>
</feature>
<feature type="transmembrane region" description="Helical" evidence="1">
    <location>
        <begin position="163"/>
        <end position="183"/>
    </location>
</feature>
<feature type="transmembrane region" description="Helical" evidence="1">
    <location>
        <begin position="199"/>
        <end position="219"/>
    </location>
</feature>
<feature type="transmembrane region" description="Helical" evidence="1">
    <location>
        <begin position="224"/>
        <end position="244"/>
    </location>
</feature>
<feature type="transmembrane region" description="Helical" evidence="1">
    <location>
        <begin position="254"/>
        <end position="274"/>
    </location>
</feature>
<feature type="transmembrane region" description="Helical" evidence="1">
    <location>
        <begin position="289"/>
        <end position="309"/>
    </location>
</feature>
<dbReference type="EMBL" id="CP000948">
    <property type="protein sequence ID" value="ACB04922.1"/>
    <property type="molecule type" value="Genomic_DNA"/>
</dbReference>
<dbReference type="RefSeq" id="WP_001166063.1">
    <property type="nucleotide sequence ID" value="NC_010473.1"/>
</dbReference>
<dbReference type="GeneID" id="75204583"/>
<dbReference type="KEGG" id="ecd:ECDH10B_4099"/>
<dbReference type="HOGENOM" id="CLU_057476_0_1_6"/>
<dbReference type="GO" id="GO:0005886">
    <property type="term" value="C:plasma membrane"/>
    <property type="evidence" value="ECO:0007669"/>
    <property type="project" value="UniProtKB-SubCell"/>
</dbReference>
<dbReference type="GO" id="GO:0015649">
    <property type="term" value="F:2-keto-3-deoxygluconate:proton symporter activity"/>
    <property type="evidence" value="ECO:0007669"/>
    <property type="project" value="UniProtKB-UniRule"/>
</dbReference>
<dbReference type="HAMAP" id="MF_00070">
    <property type="entry name" value="KdgT"/>
    <property type="match status" value="1"/>
</dbReference>
<dbReference type="InterPro" id="IPR004684">
    <property type="entry name" value="2keto-3dGluconate_permease"/>
</dbReference>
<dbReference type="InterPro" id="IPR018395">
    <property type="entry name" value="2keto-3dGluconate_permease_sub"/>
</dbReference>
<dbReference type="NCBIfam" id="TIGR00793">
    <property type="entry name" value="kdgT"/>
    <property type="match status" value="1"/>
</dbReference>
<dbReference type="Pfam" id="PF03812">
    <property type="entry name" value="KdgT"/>
    <property type="match status" value="1"/>
</dbReference>
<name>KDGT_ECODH</name>
<keyword id="KW-0997">Cell inner membrane</keyword>
<keyword id="KW-1003">Cell membrane</keyword>
<keyword id="KW-0472">Membrane</keyword>
<keyword id="KW-0762">Sugar transport</keyword>
<keyword id="KW-0769">Symport</keyword>
<keyword id="KW-0812">Transmembrane</keyword>
<keyword id="KW-1133">Transmembrane helix</keyword>
<keyword id="KW-0813">Transport</keyword>
<evidence type="ECO:0000255" key="1">
    <source>
        <dbReference type="HAMAP-Rule" id="MF_00070"/>
    </source>
</evidence>
<accession>B1XB76</accession>